<dbReference type="EMBL" id="AM747720">
    <property type="protein sequence ID" value="CAR53772.1"/>
    <property type="molecule type" value="Genomic_DNA"/>
</dbReference>
<dbReference type="RefSeq" id="WP_006487143.1">
    <property type="nucleotide sequence ID" value="NC_011000.1"/>
</dbReference>
<dbReference type="SMR" id="B4E5X9"/>
<dbReference type="GeneID" id="56557012"/>
<dbReference type="KEGG" id="bcj:BCAL3449"/>
<dbReference type="eggNOG" id="COG4582">
    <property type="taxonomic scope" value="Bacteria"/>
</dbReference>
<dbReference type="HOGENOM" id="CLU_076303_0_1_4"/>
<dbReference type="BioCyc" id="BCEN216591:G1G1V-3834-MONOMER"/>
<dbReference type="Proteomes" id="UP000001035">
    <property type="component" value="Chromosome 1"/>
</dbReference>
<dbReference type="GO" id="GO:0032153">
    <property type="term" value="C:cell division site"/>
    <property type="evidence" value="ECO:0007669"/>
    <property type="project" value="TreeGrafter"/>
</dbReference>
<dbReference type="GO" id="GO:0005737">
    <property type="term" value="C:cytoplasm"/>
    <property type="evidence" value="ECO:0007669"/>
    <property type="project" value="UniProtKB-SubCell"/>
</dbReference>
<dbReference type="GO" id="GO:0000917">
    <property type="term" value="P:division septum assembly"/>
    <property type="evidence" value="ECO:0007669"/>
    <property type="project" value="UniProtKB-KW"/>
</dbReference>
<dbReference type="GO" id="GO:0043093">
    <property type="term" value="P:FtsZ-dependent cytokinesis"/>
    <property type="evidence" value="ECO:0007669"/>
    <property type="project" value="UniProtKB-UniRule"/>
</dbReference>
<dbReference type="Gene3D" id="1.10.3900.10">
    <property type="entry name" value="YacF-like"/>
    <property type="match status" value="1"/>
</dbReference>
<dbReference type="Gene3D" id="2.60.440.10">
    <property type="entry name" value="YacF-like domains"/>
    <property type="match status" value="1"/>
</dbReference>
<dbReference type="HAMAP" id="MF_01092">
    <property type="entry name" value="ZapD"/>
    <property type="match status" value="1"/>
</dbReference>
<dbReference type="InterPro" id="IPR009777">
    <property type="entry name" value="ZapD"/>
</dbReference>
<dbReference type="InterPro" id="IPR027462">
    <property type="entry name" value="ZapD_C"/>
</dbReference>
<dbReference type="InterPro" id="IPR036268">
    <property type="entry name" value="ZapD_sf"/>
</dbReference>
<dbReference type="NCBIfam" id="NF003656">
    <property type="entry name" value="PRK05287.1-4"/>
    <property type="match status" value="1"/>
</dbReference>
<dbReference type="PANTHER" id="PTHR39455">
    <property type="entry name" value="CELL DIVISION PROTEIN ZAPD"/>
    <property type="match status" value="1"/>
</dbReference>
<dbReference type="PANTHER" id="PTHR39455:SF1">
    <property type="entry name" value="CELL DIVISION PROTEIN ZAPD"/>
    <property type="match status" value="1"/>
</dbReference>
<dbReference type="Pfam" id="PF07072">
    <property type="entry name" value="ZapD"/>
    <property type="match status" value="1"/>
</dbReference>
<dbReference type="SUPFAM" id="SSF160950">
    <property type="entry name" value="YacF-like"/>
    <property type="match status" value="1"/>
</dbReference>
<proteinExistence type="inferred from homology"/>
<organism>
    <name type="scientific">Burkholderia cenocepacia (strain ATCC BAA-245 / DSM 16553 / LMG 16656 / NCTC 13227 / J2315 / CF5610)</name>
    <name type="common">Burkholderia cepacia (strain J2315)</name>
    <dbReference type="NCBI Taxonomy" id="216591"/>
    <lineage>
        <taxon>Bacteria</taxon>
        <taxon>Pseudomonadati</taxon>
        <taxon>Pseudomonadota</taxon>
        <taxon>Betaproteobacteria</taxon>
        <taxon>Burkholderiales</taxon>
        <taxon>Burkholderiaceae</taxon>
        <taxon>Burkholderia</taxon>
        <taxon>Burkholderia cepacia complex</taxon>
    </lineage>
</organism>
<feature type="chain" id="PRO_1000136930" description="Cell division protein ZapD">
    <location>
        <begin position="1"/>
        <end position="251"/>
    </location>
</feature>
<comment type="function">
    <text evidence="1">Cell division factor that enhances FtsZ-ring assembly. Directly interacts with FtsZ and promotes bundling of FtsZ protofilaments, with a reduction in FtsZ GTPase activity.</text>
</comment>
<comment type="subunit">
    <text evidence="1">Interacts with FtsZ.</text>
</comment>
<comment type="subcellular location">
    <subcellularLocation>
        <location evidence="1">Cytoplasm</location>
    </subcellularLocation>
    <text evidence="1">Localizes to mid-cell in an FtsZ-dependent manner.</text>
</comment>
<comment type="similarity">
    <text evidence="1">Belongs to the ZapD family.</text>
</comment>
<sequence length="251" mass="28890">MILYEYPFNERIRTLLRLEDLFERFAFFLAQEDPREHHVALTTLFEIAEVTGRADLKSDLMKELERQRQTLAPFRGNPGIEQNALEAVLGEIEQTLANLAQMQGKTGQHLVDNEWLASIRSRAVIPGGTCKFDLPSYYAWQQWPAEQRRQDIAKWVLPMLPLRDAAAIVLRLARESGQASKVMAMQGSYQQMLSGRTYQLMQVRVAPELRVIPEASANKYMLWVRFTMQDGDVRPRAVDIDVPFHLTLCNL</sequence>
<accession>B4E5X9</accession>
<keyword id="KW-0131">Cell cycle</keyword>
<keyword id="KW-0132">Cell division</keyword>
<keyword id="KW-0963">Cytoplasm</keyword>
<keyword id="KW-0717">Septation</keyword>
<evidence type="ECO:0000255" key="1">
    <source>
        <dbReference type="HAMAP-Rule" id="MF_01092"/>
    </source>
</evidence>
<name>ZAPD_BURCJ</name>
<gene>
    <name evidence="1" type="primary">zapD</name>
    <name type="ordered locus">BceJ2315_33870</name>
    <name type="ORF">BCAL3449</name>
</gene>
<protein>
    <recommendedName>
        <fullName evidence="1">Cell division protein ZapD</fullName>
    </recommendedName>
    <alternativeName>
        <fullName evidence="1">Z ring-associated protein D</fullName>
    </alternativeName>
</protein>
<reference key="1">
    <citation type="journal article" date="2009" name="J. Bacteriol.">
        <title>The genome of Burkholderia cenocepacia J2315, an epidemic pathogen of cystic fibrosis patients.</title>
        <authorList>
            <person name="Holden M.T."/>
            <person name="Seth-Smith H.M."/>
            <person name="Crossman L.C."/>
            <person name="Sebaihia M."/>
            <person name="Bentley S.D."/>
            <person name="Cerdeno-Tarraga A.M."/>
            <person name="Thomson N.R."/>
            <person name="Bason N."/>
            <person name="Quail M.A."/>
            <person name="Sharp S."/>
            <person name="Cherevach I."/>
            <person name="Churcher C."/>
            <person name="Goodhead I."/>
            <person name="Hauser H."/>
            <person name="Holroyd N."/>
            <person name="Mungall K."/>
            <person name="Scott P."/>
            <person name="Walker D."/>
            <person name="White B."/>
            <person name="Rose H."/>
            <person name="Iversen P."/>
            <person name="Mil-Homens D."/>
            <person name="Rocha E.P."/>
            <person name="Fialho A.M."/>
            <person name="Baldwin A."/>
            <person name="Dowson C."/>
            <person name="Barrell B.G."/>
            <person name="Govan J.R."/>
            <person name="Vandamme P."/>
            <person name="Hart C.A."/>
            <person name="Mahenthiralingam E."/>
            <person name="Parkhill J."/>
        </authorList>
    </citation>
    <scope>NUCLEOTIDE SEQUENCE [LARGE SCALE GENOMIC DNA]</scope>
    <source>
        <strain>ATCC BAA-245 / DSM 16553 / LMG 16656 / NCTC 13227 / J2315 / CF5610</strain>
    </source>
</reference>